<name>F167B_MOUSE</name>
<sequence>MSLGPLKFQAVGEKGEEDEEESLDSLKALTAKLQLQTRRPSYLEWTARVQSRAWYRAQARPEPVGPGAICGFDSMDSALEWLRRELQEMRAQDRQLAGQLLRLRARLHRLKVDQVCHLHQELLDEAELEMELESGTGLPLAPPLRHLGLTRMNISARRFTLC</sequence>
<protein>
    <recommendedName>
        <fullName>Protein FAM167B</fullName>
    </recommendedName>
    <alternativeName>
        <fullName>Protein SEC</fullName>
    </alternativeName>
</protein>
<accession>P17257</accession>
<accession>Q3UNY6</accession>
<comment type="similarity">
    <text evidence="1">Belongs to the FAM167 (SEC) family.</text>
</comment>
<comment type="caution">
    <text evidence="2">Was originally thought to originate from human.</text>
</comment>
<comment type="sequence caution" evidence="1">
    <conflict type="erroneous initiation">
        <sequence resource="EMBL-CDS" id="CAA36502"/>
    </conflict>
</comment>
<organism>
    <name type="scientific">Mus musculus</name>
    <name type="common">Mouse</name>
    <dbReference type="NCBI Taxonomy" id="10090"/>
    <lineage>
        <taxon>Eukaryota</taxon>
        <taxon>Metazoa</taxon>
        <taxon>Chordata</taxon>
        <taxon>Craniata</taxon>
        <taxon>Vertebrata</taxon>
        <taxon>Euteleostomi</taxon>
        <taxon>Mammalia</taxon>
        <taxon>Eutheria</taxon>
        <taxon>Euarchontoglires</taxon>
        <taxon>Glires</taxon>
        <taxon>Rodentia</taxon>
        <taxon>Myomorpha</taxon>
        <taxon>Muroidea</taxon>
        <taxon>Muridae</taxon>
        <taxon>Murinae</taxon>
        <taxon>Mus</taxon>
        <taxon>Mus</taxon>
    </lineage>
</organism>
<gene>
    <name type="primary">Fam167b</name>
    <name type="synonym">Sec</name>
</gene>
<dbReference type="EMBL" id="AK134621">
    <property type="protein sequence ID" value="BAE22213.1"/>
    <property type="molecule type" value="mRNA"/>
</dbReference>
<dbReference type="EMBL" id="AK143928">
    <property type="protein sequence ID" value="BAE25611.1"/>
    <property type="molecule type" value="mRNA"/>
</dbReference>
<dbReference type="EMBL" id="AL671759">
    <property type="status" value="NOT_ANNOTATED_CDS"/>
    <property type="molecule type" value="Genomic_DNA"/>
</dbReference>
<dbReference type="EMBL" id="X52259">
    <property type="protein sequence ID" value="CAA36502.1"/>
    <property type="status" value="ALT_INIT"/>
    <property type="molecule type" value="Genomic_DNA"/>
</dbReference>
<dbReference type="CCDS" id="CCDS51307.1"/>
<dbReference type="PIR" id="A36751">
    <property type="entry name" value="TVHUSE"/>
</dbReference>
<dbReference type="RefSeq" id="NP_877584.2">
    <property type="nucleotide sequence ID" value="NM_182783.2"/>
</dbReference>
<dbReference type="SMR" id="P17257"/>
<dbReference type="STRING" id="10090.ENSMUSP00000050531"/>
<dbReference type="iPTMnet" id="P17257"/>
<dbReference type="PhosphoSitePlus" id="P17257"/>
<dbReference type="PaxDb" id="10090-ENSMUSP00000050531"/>
<dbReference type="ProteomicsDB" id="271525"/>
<dbReference type="Antibodypedia" id="31270">
    <property type="antibodies" value="19 antibodies from 12 providers"/>
</dbReference>
<dbReference type="Ensembl" id="ENSMUST00000052835.9">
    <property type="protein sequence ID" value="ENSMUSP00000050531.9"/>
    <property type="gene ID" value="ENSMUSG00000050493.9"/>
</dbReference>
<dbReference type="GeneID" id="230766"/>
<dbReference type="KEGG" id="mmu:230766"/>
<dbReference type="UCSC" id="uc008uxl.2">
    <property type="organism name" value="mouse"/>
</dbReference>
<dbReference type="AGR" id="MGI:2668032"/>
<dbReference type="CTD" id="84734"/>
<dbReference type="MGI" id="MGI:2668032">
    <property type="gene designation" value="Fam167b"/>
</dbReference>
<dbReference type="VEuPathDB" id="HostDB:ENSMUSG00000050493"/>
<dbReference type="eggNOG" id="ENOG502S04N">
    <property type="taxonomic scope" value="Eukaryota"/>
</dbReference>
<dbReference type="GeneTree" id="ENSGT00940000159693"/>
<dbReference type="HOGENOM" id="CLU_111170_0_0_1"/>
<dbReference type="InParanoid" id="P17257"/>
<dbReference type="OMA" id="IPPKMAF"/>
<dbReference type="OrthoDB" id="5965452at2759"/>
<dbReference type="PhylomeDB" id="P17257"/>
<dbReference type="TreeFam" id="TF330468"/>
<dbReference type="BioGRID-ORCS" id="230766">
    <property type="hits" value="1 hit in 77 CRISPR screens"/>
</dbReference>
<dbReference type="ChiTaRS" id="Eefsec">
    <property type="organism name" value="mouse"/>
</dbReference>
<dbReference type="PRO" id="PR:P17257"/>
<dbReference type="Proteomes" id="UP000000589">
    <property type="component" value="Chromosome 4"/>
</dbReference>
<dbReference type="RNAct" id="P17257">
    <property type="molecule type" value="protein"/>
</dbReference>
<dbReference type="Bgee" id="ENSMUSG00000050493">
    <property type="expression patterns" value="Expressed in right kidney and 64 other cell types or tissues"/>
</dbReference>
<dbReference type="InterPro" id="IPR024280">
    <property type="entry name" value="FAM167"/>
</dbReference>
<dbReference type="InterPro" id="IPR051771">
    <property type="entry name" value="FAM167_domain"/>
</dbReference>
<dbReference type="PANTHER" id="PTHR32289">
    <property type="entry name" value="PROTEIN FAM167A"/>
    <property type="match status" value="1"/>
</dbReference>
<dbReference type="PANTHER" id="PTHR32289:SF4">
    <property type="entry name" value="PROTEIN FAM167B"/>
    <property type="match status" value="1"/>
</dbReference>
<dbReference type="Pfam" id="PF11652">
    <property type="entry name" value="FAM167"/>
    <property type="match status" value="1"/>
</dbReference>
<evidence type="ECO:0000305" key="1"/>
<evidence type="ECO:0000305" key="2">
    <source>
    </source>
</evidence>
<feature type="chain" id="PRO_0000221432" description="Protein FAM167B">
    <location>
        <begin position="1"/>
        <end position="162"/>
    </location>
</feature>
<feature type="sequence conflict" description="In Ref. 3; CAA36502." evidence="1" ref="3">
    <original>LL</original>
    <variation>PV</variation>
    <location>
        <begin position="100"/>
        <end position="101"/>
    </location>
</feature>
<feature type="sequence conflict" description="In Ref. 3; CAA36502." evidence="1" ref="3">
    <original>LC</original>
    <variation>SADSRLGCLLQYLGERRKEEVPDPGGSGYLLGKVGNT</variation>
    <location>
        <begin position="161"/>
        <end position="162"/>
    </location>
</feature>
<reference key="1">
    <citation type="journal article" date="2005" name="Science">
        <title>The transcriptional landscape of the mammalian genome.</title>
        <authorList>
            <person name="Carninci P."/>
            <person name="Kasukawa T."/>
            <person name="Katayama S."/>
            <person name="Gough J."/>
            <person name="Frith M.C."/>
            <person name="Maeda N."/>
            <person name="Oyama R."/>
            <person name="Ravasi T."/>
            <person name="Lenhard B."/>
            <person name="Wells C."/>
            <person name="Kodzius R."/>
            <person name="Shimokawa K."/>
            <person name="Bajic V.B."/>
            <person name="Brenner S.E."/>
            <person name="Batalov S."/>
            <person name="Forrest A.R."/>
            <person name="Zavolan M."/>
            <person name="Davis M.J."/>
            <person name="Wilming L.G."/>
            <person name="Aidinis V."/>
            <person name="Allen J.E."/>
            <person name="Ambesi-Impiombato A."/>
            <person name="Apweiler R."/>
            <person name="Aturaliya R.N."/>
            <person name="Bailey T.L."/>
            <person name="Bansal M."/>
            <person name="Baxter L."/>
            <person name="Beisel K.W."/>
            <person name="Bersano T."/>
            <person name="Bono H."/>
            <person name="Chalk A.M."/>
            <person name="Chiu K.P."/>
            <person name="Choudhary V."/>
            <person name="Christoffels A."/>
            <person name="Clutterbuck D.R."/>
            <person name="Crowe M.L."/>
            <person name="Dalla E."/>
            <person name="Dalrymple B.P."/>
            <person name="de Bono B."/>
            <person name="Della Gatta G."/>
            <person name="di Bernardo D."/>
            <person name="Down T."/>
            <person name="Engstrom P."/>
            <person name="Fagiolini M."/>
            <person name="Faulkner G."/>
            <person name="Fletcher C.F."/>
            <person name="Fukushima T."/>
            <person name="Furuno M."/>
            <person name="Futaki S."/>
            <person name="Gariboldi M."/>
            <person name="Georgii-Hemming P."/>
            <person name="Gingeras T.R."/>
            <person name="Gojobori T."/>
            <person name="Green R.E."/>
            <person name="Gustincich S."/>
            <person name="Harbers M."/>
            <person name="Hayashi Y."/>
            <person name="Hensch T.K."/>
            <person name="Hirokawa N."/>
            <person name="Hill D."/>
            <person name="Huminiecki L."/>
            <person name="Iacono M."/>
            <person name="Ikeo K."/>
            <person name="Iwama A."/>
            <person name="Ishikawa T."/>
            <person name="Jakt M."/>
            <person name="Kanapin A."/>
            <person name="Katoh M."/>
            <person name="Kawasawa Y."/>
            <person name="Kelso J."/>
            <person name="Kitamura H."/>
            <person name="Kitano H."/>
            <person name="Kollias G."/>
            <person name="Krishnan S.P."/>
            <person name="Kruger A."/>
            <person name="Kummerfeld S.K."/>
            <person name="Kurochkin I.V."/>
            <person name="Lareau L.F."/>
            <person name="Lazarevic D."/>
            <person name="Lipovich L."/>
            <person name="Liu J."/>
            <person name="Liuni S."/>
            <person name="McWilliam S."/>
            <person name="Madan Babu M."/>
            <person name="Madera M."/>
            <person name="Marchionni L."/>
            <person name="Matsuda H."/>
            <person name="Matsuzawa S."/>
            <person name="Miki H."/>
            <person name="Mignone F."/>
            <person name="Miyake S."/>
            <person name="Morris K."/>
            <person name="Mottagui-Tabar S."/>
            <person name="Mulder N."/>
            <person name="Nakano N."/>
            <person name="Nakauchi H."/>
            <person name="Ng P."/>
            <person name="Nilsson R."/>
            <person name="Nishiguchi S."/>
            <person name="Nishikawa S."/>
            <person name="Nori F."/>
            <person name="Ohara O."/>
            <person name="Okazaki Y."/>
            <person name="Orlando V."/>
            <person name="Pang K.C."/>
            <person name="Pavan W.J."/>
            <person name="Pavesi G."/>
            <person name="Pesole G."/>
            <person name="Petrovsky N."/>
            <person name="Piazza S."/>
            <person name="Reed J."/>
            <person name="Reid J.F."/>
            <person name="Ring B.Z."/>
            <person name="Ringwald M."/>
            <person name="Rost B."/>
            <person name="Ruan Y."/>
            <person name="Salzberg S.L."/>
            <person name="Sandelin A."/>
            <person name="Schneider C."/>
            <person name="Schoenbach C."/>
            <person name="Sekiguchi K."/>
            <person name="Semple C.A."/>
            <person name="Seno S."/>
            <person name="Sessa L."/>
            <person name="Sheng Y."/>
            <person name="Shibata Y."/>
            <person name="Shimada H."/>
            <person name="Shimada K."/>
            <person name="Silva D."/>
            <person name="Sinclair B."/>
            <person name="Sperling S."/>
            <person name="Stupka E."/>
            <person name="Sugiura K."/>
            <person name="Sultana R."/>
            <person name="Takenaka Y."/>
            <person name="Taki K."/>
            <person name="Tammoja K."/>
            <person name="Tan S.L."/>
            <person name="Tang S."/>
            <person name="Taylor M.S."/>
            <person name="Tegner J."/>
            <person name="Teichmann S.A."/>
            <person name="Ueda H.R."/>
            <person name="van Nimwegen E."/>
            <person name="Verardo R."/>
            <person name="Wei C.L."/>
            <person name="Yagi K."/>
            <person name="Yamanishi H."/>
            <person name="Zabarovsky E."/>
            <person name="Zhu S."/>
            <person name="Zimmer A."/>
            <person name="Hide W."/>
            <person name="Bult C."/>
            <person name="Grimmond S.M."/>
            <person name="Teasdale R.D."/>
            <person name="Liu E.T."/>
            <person name="Brusic V."/>
            <person name="Quackenbush J."/>
            <person name="Wahlestedt C."/>
            <person name="Mattick J.S."/>
            <person name="Hume D.A."/>
            <person name="Kai C."/>
            <person name="Sasaki D."/>
            <person name="Tomaru Y."/>
            <person name="Fukuda S."/>
            <person name="Kanamori-Katayama M."/>
            <person name="Suzuki M."/>
            <person name="Aoki J."/>
            <person name="Arakawa T."/>
            <person name="Iida J."/>
            <person name="Imamura K."/>
            <person name="Itoh M."/>
            <person name="Kato T."/>
            <person name="Kawaji H."/>
            <person name="Kawagashira N."/>
            <person name="Kawashima T."/>
            <person name="Kojima M."/>
            <person name="Kondo S."/>
            <person name="Konno H."/>
            <person name="Nakano K."/>
            <person name="Ninomiya N."/>
            <person name="Nishio T."/>
            <person name="Okada M."/>
            <person name="Plessy C."/>
            <person name="Shibata K."/>
            <person name="Shiraki T."/>
            <person name="Suzuki S."/>
            <person name="Tagami M."/>
            <person name="Waki K."/>
            <person name="Watahiki A."/>
            <person name="Okamura-Oho Y."/>
            <person name="Suzuki H."/>
            <person name="Kawai J."/>
            <person name="Hayashizaki Y."/>
        </authorList>
    </citation>
    <scope>NUCLEOTIDE SEQUENCE [LARGE SCALE MRNA]</scope>
    <source>
        <strain>C57BL/6J</strain>
        <tissue>Kidney</tissue>
        <tissue>Medulla oblongata</tissue>
    </source>
</reference>
<reference key="2">
    <citation type="journal article" date="2009" name="PLoS Biol.">
        <title>Lineage-specific biology revealed by a finished genome assembly of the mouse.</title>
        <authorList>
            <person name="Church D.M."/>
            <person name="Goodstadt L."/>
            <person name="Hillier L.W."/>
            <person name="Zody M.C."/>
            <person name="Goldstein S."/>
            <person name="She X."/>
            <person name="Bult C.J."/>
            <person name="Agarwala R."/>
            <person name="Cherry J.L."/>
            <person name="DiCuccio M."/>
            <person name="Hlavina W."/>
            <person name="Kapustin Y."/>
            <person name="Meric P."/>
            <person name="Maglott D."/>
            <person name="Birtle Z."/>
            <person name="Marques A.C."/>
            <person name="Graves T."/>
            <person name="Zhou S."/>
            <person name="Teague B."/>
            <person name="Potamousis K."/>
            <person name="Churas C."/>
            <person name="Place M."/>
            <person name="Herschleb J."/>
            <person name="Runnheim R."/>
            <person name="Forrest D."/>
            <person name="Amos-Landgraf J."/>
            <person name="Schwartz D.C."/>
            <person name="Cheng Z."/>
            <person name="Lindblad-Toh K."/>
            <person name="Eichler E.E."/>
            <person name="Ponting C.P."/>
        </authorList>
    </citation>
    <scope>NUCLEOTIDE SEQUENCE [LARGE SCALE GENOMIC DNA]</scope>
    <source>
        <strain>C57BL/6J</strain>
    </source>
</reference>
<reference key="3">
    <citation type="journal article" date="1990" name="Nucleic Acids Res.">
        <title>Nucleotide sequence of a human oncogene active in tumors of secretory epithelium.</title>
        <authorList>
            <person name="Lane M.A."/>
            <person name="Wong S.K."/>
            <person name="Daugherty K."/>
            <person name="Roskey M."/>
            <person name="Sousa D."/>
            <person name="Sainten A.C."/>
            <person name="Macoska J."/>
        </authorList>
    </citation>
    <scope>NUCLEOTIDE SEQUENCE [GENOMIC DNA] OF 87-162</scope>
    <source>
        <tissue>Mammary carcinoma</tissue>
    </source>
</reference>
<keyword id="KW-1185">Reference proteome</keyword>
<proteinExistence type="evidence at transcript level"/>